<proteinExistence type="inferred from homology"/>
<reference key="1">
    <citation type="journal article" date="2008" name="J. Bacteriol.">
        <title>Insights into the environmental resistance gene pool from the genome sequence of the multidrug-resistant environmental isolate Escherichia coli SMS-3-5.</title>
        <authorList>
            <person name="Fricke W.F."/>
            <person name="Wright M.S."/>
            <person name="Lindell A.H."/>
            <person name="Harkins D.M."/>
            <person name="Baker-Austin C."/>
            <person name="Ravel J."/>
            <person name="Stepanauskas R."/>
        </authorList>
    </citation>
    <scope>NUCLEOTIDE SEQUENCE [LARGE SCALE GENOMIC DNA]</scope>
    <source>
        <strain>SMS-3-5 / SECEC</strain>
    </source>
</reference>
<name>MUTS_ECOSM</name>
<comment type="function">
    <text evidence="1">This protein is involved in the repair of mismatches in DNA. It is possible that it carries out the mismatch recognition step. This protein has a weak ATPase activity.</text>
</comment>
<comment type="similarity">
    <text evidence="1">Belongs to the DNA mismatch repair MutS family.</text>
</comment>
<keyword id="KW-0067">ATP-binding</keyword>
<keyword id="KW-0227">DNA damage</keyword>
<keyword id="KW-0234">DNA repair</keyword>
<keyword id="KW-0238">DNA-binding</keyword>
<keyword id="KW-0547">Nucleotide-binding</keyword>
<organism>
    <name type="scientific">Escherichia coli (strain SMS-3-5 / SECEC)</name>
    <dbReference type="NCBI Taxonomy" id="439855"/>
    <lineage>
        <taxon>Bacteria</taxon>
        <taxon>Pseudomonadati</taxon>
        <taxon>Pseudomonadota</taxon>
        <taxon>Gammaproteobacteria</taxon>
        <taxon>Enterobacterales</taxon>
        <taxon>Enterobacteriaceae</taxon>
        <taxon>Escherichia</taxon>
    </lineage>
</organism>
<accession>B1LQ55</accession>
<gene>
    <name evidence="1" type="primary">mutS</name>
    <name type="ordered locus">EcSMS35_2860</name>
</gene>
<sequence length="853" mass="95299">MSAIENFDAHTPMMQQYLKLKAQHPEILLFYRMGDFYELFYDDAKRASQLLDISLTKRGASAGEPIPMAGIPYHAVENYLAKLVNQGESVAICEQIGDPATSKGPVERKVVRIVTPGTISDEALLQERQDNLLAAIWQDSKGFGYATLDISSGRFRLSEPADRETMAAELQRTNPAELLYAEDFAEMSLIEGRRGLRRRPLWEFEIDTARQQLNLQFGTRDLVGFGVENAPRGLCAAGCLLQYAKDTQRTTLPHIRSITMEREQDSIIMDAATRRNLEITQNLAGGAENTLASVLDCTVTPMGSRMLKRWLHMPVRDTRVLLERQQTIGALQDFTAELQPVLRQVGDLERILARLALRTARPRDLARMRHAFQQLPELRALLENVDSAPVQALREKMGEFAELRDLLERAIIDTPPVLVRDGGVIAPGYNEELDEWRALADGATDYLERLEVRERERTGLDTLKVGFNAVHGYYIQISRGQSHLAPINYMRRQTLKNAERYIIPELKEYEDKVLTSKGKALALEKQLYEELFDLLLPHLEALQQSASALAELDVLVNLAERAYTLNYTCPTFIDKPGIRITEGRHPVVEQVLNEPFIANPLNLSPQRRMLIITGPNMGGKSTYMRQTALIALMAYIGSYVPAQKVEIGPIDRIFTRVGAADDLASGRSTFMVEMTETANILHNATEYSLVLMDEIGRGTSTYDGLSLAWACAENLANKIKALTLFATHYFELTQLPEKMEGVANVHLDALEHGDTIAFMHSVQDGAASKSYGLAVAALAGVPKEVIKRARQKLRELESISPNAAATQVDGTQMSLLSVPEETSPAVEALENLDPDSLTPRQALEWIYRLKSLV</sequence>
<protein>
    <recommendedName>
        <fullName evidence="1">DNA mismatch repair protein MutS</fullName>
    </recommendedName>
</protein>
<feature type="chain" id="PRO_1000117287" description="DNA mismatch repair protein MutS">
    <location>
        <begin position="1"/>
        <end position="853"/>
    </location>
</feature>
<feature type="binding site" evidence="1">
    <location>
        <begin position="614"/>
        <end position="621"/>
    </location>
    <ligand>
        <name>ATP</name>
        <dbReference type="ChEBI" id="CHEBI:30616"/>
    </ligand>
</feature>
<dbReference type="EMBL" id="CP000970">
    <property type="protein sequence ID" value="ACB16012.1"/>
    <property type="molecule type" value="Genomic_DNA"/>
</dbReference>
<dbReference type="RefSeq" id="WP_001272887.1">
    <property type="nucleotide sequence ID" value="NC_010498.1"/>
</dbReference>
<dbReference type="SMR" id="B1LQ55"/>
<dbReference type="KEGG" id="ecm:EcSMS35_2860"/>
<dbReference type="HOGENOM" id="CLU_002472_4_0_6"/>
<dbReference type="Proteomes" id="UP000007011">
    <property type="component" value="Chromosome"/>
</dbReference>
<dbReference type="GO" id="GO:0005829">
    <property type="term" value="C:cytosol"/>
    <property type="evidence" value="ECO:0007669"/>
    <property type="project" value="TreeGrafter"/>
</dbReference>
<dbReference type="GO" id="GO:0005524">
    <property type="term" value="F:ATP binding"/>
    <property type="evidence" value="ECO:0007669"/>
    <property type="project" value="UniProtKB-UniRule"/>
</dbReference>
<dbReference type="GO" id="GO:0140664">
    <property type="term" value="F:ATP-dependent DNA damage sensor activity"/>
    <property type="evidence" value="ECO:0007669"/>
    <property type="project" value="InterPro"/>
</dbReference>
<dbReference type="GO" id="GO:0003684">
    <property type="term" value="F:damaged DNA binding"/>
    <property type="evidence" value="ECO:0007669"/>
    <property type="project" value="UniProtKB-UniRule"/>
</dbReference>
<dbReference type="GO" id="GO:0030983">
    <property type="term" value="F:mismatched DNA binding"/>
    <property type="evidence" value="ECO:0007669"/>
    <property type="project" value="InterPro"/>
</dbReference>
<dbReference type="GO" id="GO:0006298">
    <property type="term" value="P:mismatch repair"/>
    <property type="evidence" value="ECO:0007669"/>
    <property type="project" value="UniProtKB-UniRule"/>
</dbReference>
<dbReference type="CDD" id="cd03284">
    <property type="entry name" value="ABC_MutS1"/>
    <property type="match status" value="1"/>
</dbReference>
<dbReference type="FunFam" id="1.10.1420.10:FF:000002">
    <property type="entry name" value="DNA mismatch repair protein MutS"/>
    <property type="match status" value="1"/>
</dbReference>
<dbReference type="FunFam" id="3.30.420.110:FF:000001">
    <property type="entry name" value="DNA mismatch repair protein MutS"/>
    <property type="match status" value="1"/>
</dbReference>
<dbReference type="FunFam" id="3.40.1170.10:FF:000001">
    <property type="entry name" value="DNA mismatch repair protein MutS"/>
    <property type="match status" value="1"/>
</dbReference>
<dbReference type="FunFam" id="3.40.50.300:FF:000283">
    <property type="entry name" value="DNA mismatch repair protein MutS"/>
    <property type="match status" value="1"/>
</dbReference>
<dbReference type="Gene3D" id="1.10.1420.10">
    <property type="match status" value="2"/>
</dbReference>
<dbReference type="Gene3D" id="6.10.140.430">
    <property type="match status" value="1"/>
</dbReference>
<dbReference type="Gene3D" id="3.40.1170.10">
    <property type="entry name" value="DNA repair protein MutS, domain I"/>
    <property type="match status" value="1"/>
</dbReference>
<dbReference type="Gene3D" id="3.30.420.110">
    <property type="entry name" value="MutS, connector domain"/>
    <property type="match status" value="1"/>
</dbReference>
<dbReference type="Gene3D" id="3.40.50.300">
    <property type="entry name" value="P-loop containing nucleotide triphosphate hydrolases"/>
    <property type="match status" value="1"/>
</dbReference>
<dbReference type="HAMAP" id="MF_00096">
    <property type="entry name" value="MutS"/>
    <property type="match status" value="1"/>
</dbReference>
<dbReference type="InterPro" id="IPR005748">
    <property type="entry name" value="DNA_mismatch_repair_MutS"/>
</dbReference>
<dbReference type="InterPro" id="IPR007695">
    <property type="entry name" value="DNA_mismatch_repair_MutS-lik_N"/>
</dbReference>
<dbReference type="InterPro" id="IPR017261">
    <property type="entry name" value="DNA_mismatch_repair_MutS/MSH"/>
</dbReference>
<dbReference type="InterPro" id="IPR000432">
    <property type="entry name" value="DNA_mismatch_repair_MutS_C"/>
</dbReference>
<dbReference type="InterPro" id="IPR007861">
    <property type="entry name" value="DNA_mismatch_repair_MutS_clamp"/>
</dbReference>
<dbReference type="InterPro" id="IPR007696">
    <property type="entry name" value="DNA_mismatch_repair_MutS_core"/>
</dbReference>
<dbReference type="InterPro" id="IPR016151">
    <property type="entry name" value="DNA_mismatch_repair_MutS_N"/>
</dbReference>
<dbReference type="InterPro" id="IPR036187">
    <property type="entry name" value="DNA_mismatch_repair_MutS_sf"/>
</dbReference>
<dbReference type="InterPro" id="IPR007860">
    <property type="entry name" value="DNA_mmatch_repair_MutS_con_dom"/>
</dbReference>
<dbReference type="InterPro" id="IPR045076">
    <property type="entry name" value="MutS"/>
</dbReference>
<dbReference type="InterPro" id="IPR036678">
    <property type="entry name" value="MutS_con_dom_sf"/>
</dbReference>
<dbReference type="InterPro" id="IPR027417">
    <property type="entry name" value="P-loop_NTPase"/>
</dbReference>
<dbReference type="NCBIfam" id="TIGR01070">
    <property type="entry name" value="mutS1"/>
    <property type="match status" value="1"/>
</dbReference>
<dbReference type="NCBIfam" id="NF003810">
    <property type="entry name" value="PRK05399.1"/>
    <property type="match status" value="1"/>
</dbReference>
<dbReference type="PANTHER" id="PTHR11361:SF34">
    <property type="entry name" value="DNA MISMATCH REPAIR PROTEIN MSH1, MITOCHONDRIAL"/>
    <property type="match status" value="1"/>
</dbReference>
<dbReference type="PANTHER" id="PTHR11361">
    <property type="entry name" value="DNA MISMATCH REPAIR PROTEIN MUTS FAMILY MEMBER"/>
    <property type="match status" value="1"/>
</dbReference>
<dbReference type="Pfam" id="PF01624">
    <property type="entry name" value="MutS_I"/>
    <property type="match status" value="1"/>
</dbReference>
<dbReference type="Pfam" id="PF05188">
    <property type="entry name" value="MutS_II"/>
    <property type="match status" value="1"/>
</dbReference>
<dbReference type="Pfam" id="PF05192">
    <property type="entry name" value="MutS_III"/>
    <property type="match status" value="1"/>
</dbReference>
<dbReference type="Pfam" id="PF05190">
    <property type="entry name" value="MutS_IV"/>
    <property type="match status" value="1"/>
</dbReference>
<dbReference type="Pfam" id="PF00488">
    <property type="entry name" value="MutS_V"/>
    <property type="match status" value="1"/>
</dbReference>
<dbReference type="PIRSF" id="PIRSF037677">
    <property type="entry name" value="DNA_mis_repair_Msh6"/>
    <property type="match status" value="1"/>
</dbReference>
<dbReference type="SMART" id="SM00534">
    <property type="entry name" value="MUTSac"/>
    <property type="match status" value="1"/>
</dbReference>
<dbReference type="SMART" id="SM00533">
    <property type="entry name" value="MUTSd"/>
    <property type="match status" value="1"/>
</dbReference>
<dbReference type="SUPFAM" id="SSF55271">
    <property type="entry name" value="DNA repair protein MutS, domain I"/>
    <property type="match status" value="1"/>
</dbReference>
<dbReference type="SUPFAM" id="SSF53150">
    <property type="entry name" value="DNA repair protein MutS, domain II"/>
    <property type="match status" value="1"/>
</dbReference>
<dbReference type="SUPFAM" id="SSF48334">
    <property type="entry name" value="DNA repair protein MutS, domain III"/>
    <property type="match status" value="1"/>
</dbReference>
<dbReference type="SUPFAM" id="SSF52540">
    <property type="entry name" value="P-loop containing nucleoside triphosphate hydrolases"/>
    <property type="match status" value="1"/>
</dbReference>
<dbReference type="PROSITE" id="PS00486">
    <property type="entry name" value="DNA_MISMATCH_REPAIR_2"/>
    <property type="match status" value="1"/>
</dbReference>
<evidence type="ECO:0000255" key="1">
    <source>
        <dbReference type="HAMAP-Rule" id="MF_00096"/>
    </source>
</evidence>